<reference key="1">
    <citation type="journal article" date="2006" name="J. Bacteriol.">
        <title>The Methanosarcina barkeri genome: comparative analysis with Methanosarcina acetivorans and Methanosarcina mazei reveals extensive rearrangement within methanosarcinal genomes.</title>
        <authorList>
            <person name="Maeder D.L."/>
            <person name="Anderson I."/>
            <person name="Brettin T.S."/>
            <person name="Bruce D.C."/>
            <person name="Gilna P."/>
            <person name="Han C.S."/>
            <person name="Lapidus A."/>
            <person name="Metcalf W.W."/>
            <person name="Saunders E."/>
            <person name="Tapia R."/>
            <person name="Sowers K.R."/>
        </authorList>
    </citation>
    <scope>NUCLEOTIDE SEQUENCE [LARGE SCALE GENOMIC DNA]</scope>
    <source>
        <strain>Fusaro / DSM 804</strain>
    </source>
</reference>
<dbReference type="EC" id="2.4.2.17" evidence="1"/>
<dbReference type="EMBL" id="CP000099">
    <property type="protein sequence ID" value="AAZ70275.1"/>
    <property type="molecule type" value="Genomic_DNA"/>
</dbReference>
<dbReference type="SMR" id="Q46CW7"/>
<dbReference type="STRING" id="269797.Mbar_A1312"/>
<dbReference type="PaxDb" id="269797-Mbar_A1312"/>
<dbReference type="KEGG" id="mba:Mbar_A1312"/>
<dbReference type="eggNOG" id="arCOG02208">
    <property type="taxonomic scope" value="Archaea"/>
</dbReference>
<dbReference type="HOGENOM" id="CLU_038115_1_0_2"/>
<dbReference type="OrthoDB" id="33116at2157"/>
<dbReference type="UniPathway" id="UPA00031">
    <property type="reaction ID" value="UER00006"/>
</dbReference>
<dbReference type="GO" id="GO:0005737">
    <property type="term" value="C:cytoplasm"/>
    <property type="evidence" value="ECO:0007669"/>
    <property type="project" value="UniProtKB-SubCell"/>
</dbReference>
<dbReference type="GO" id="GO:0005524">
    <property type="term" value="F:ATP binding"/>
    <property type="evidence" value="ECO:0007669"/>
    <property type="project" value="UniProtKB-KW"/>
</dbReference>
<dbReference type="GO" id="GO:0003879">
    <property type="term" value="F:ATP phosphoribosyltransferase activity"/>
    <property type="evidence" value="ECO:0007669"/>
    <property type="project" value="UniProtKB-UniRule"/>
</dbReference>
<dbReference type="GO" id="GO:0000287">
    <property type="term" value="F:magnesium ion binding"/>
    <property type="evidence" value="ECO:0007669"/>
    <property type="project" value="UniProtKB-UniRule"/>
</dbReference>
<dbReference type="GO" id="GO:0000105">
    <property type="term" value="P:L-histidine biosynthetic process"/>
    <property type="evidence" value="ECO:0007669"/>
    <property type="project" value="UniProtKB-UniRule"/>
</dbReference>
<dbReference type="CDD" id="cd13594">
    <property type="entry name" value="PBP2_HisGL4"/>
    <property type="match status" value="1"/>
</dbReference>
<dbReference type="FunFam" id="3.30.70.120:FF:000002">
    <property type="entry name" value="ATP phosphoribosyltransferase"/>
    <property type="match status" value="1"/>
</dbReference>
<dbReference type="FunFam" id="3.40.190.10:FF:000082">
    <property type="entry name" value="ATP phosphoribosyltransferase"/>
    <property type="match status" value="1"/>
</dbReference>
<dbReference type="Gene3D" id="3.30.70.120">
    <property type="match status" value="1"/>
</dbReference>
<dbReference type="Gene3D" id="3.40.190.10">
    <property type="entry name" value="Periplasmic binding protein-like II"/>
    <property type="match status" value="2"/>
</dbReference>
<dbReference type="HAMAP" id="MF_00079">
    <property type="entry name" value="HisG_Long"/>
    <property type="match status" value="1"/>
</dbReference>
<dbReference type="InterPro" id="IPR020621">
    <property type="entry name" value="ATP-PRT_HisG_long"/>
</dbReference>
<dbReference type="InterPro" id="IPR013820">
    <property type="entry name" value="ATP_PRibTrfase_cat"/>
</dbReference>
<dbReference type="InterPro" id="IPR018198">
    <property type="entry name" value="ATP_PRibTrfase_CS"/>
</dbReference>
<dbReference type="InterPro" id="IPR001348">
    <property type="entry name" value="ATP_PRibTrfase_HisG"/>
</dbReference>
<dbReference type="InterPro" id="IPR013115">
    <property type="entry name" value="HisG_C"/>
</dbReference>
<dbReference type="InterPro" id="IPR011322">
    <property type="entry name" value="N-reg_PII-like_a/b"/>
</dbReference>
<dbReference type="InterPro" id="IPR015867">
    <property type="entry name" value="N-reg_PII/ATP_PRibTrfase_C"/>
</dbReference>
<dbReference type="NCBIfam" id="TIGR00070">
    <property type="entry name" value="hisG"/>
    <property type="match status" value="1"/>
</dbReference>
<dbReference type="NCBIfam" id="TIGR03455">
    <property type="entry name" value="HisG_C-term"/>
    <property type="match status" value="1"/>
</dbReference>
<dbReference type="PANTHER" id="PTHR21403:SF10">
    <property type="entry name" value="ATP PHOSPHORIBOSYLTRANSFERASE"/>
    <property type="match status" value="1"/>
</dbReference>
<dbReference type="PANTHER" id="PTHR21403">
    <property type="entry name" value="ATP PHOSPHORIBOSYLTRANSFERASE ATP-PRTASE"/>
    <property type="match status" value="1"/>
</dbReference>
<dbReference type="Pfam" id="PF01634">
    <property type="entry name" value="HisG"/>
    <property type="match status" value="1"/>
</dbReference>
<dbReference type="Pfam" id="PF08029">
    <property type="entry name" value="HisG_C"/>
    <property type="match status" value="1"/>
</dbReference>
<dbReference type="SUPFAM" id="SSF54913">
    <property type="entry name" value="GlnB-like"/>
    <property type="match status" value="1"/>
</dbReference>
<dbReference type="SUPFAM" id="SSF53850">
    <property type="entry name" value="Periplasmic binding protein-like II"/>
    <property type="match status" value="1"/>
</dbReference>
<dbReference type="PROSITE" id="PS01316">
    <property type="entry name" value="ATP_P_PHORIBOSYLTR"/>
    <property type="match status" value="1"/>
</dbReference>
<evidence type="ECO:0000255" key="1">
    <source>
        <dbReference type="HAMAP-Rule" id="MF_00079"/>
    </source>
</evidence>
<name>HIS1_METBF</name>
<accession>Q46CW7</accession>
<protein>
    <recommendedName>
        <fullName evidence="1">ATP phosphoribosyltransferase</fullName>
        <shortName evidence="1">ATP-PRT</shortName>
        <shortName evidence="1">ATP-PRTase</shortName>
        <ecNumber evidence="1">2.4.2.17</ecNumber>
    </recommendedName>
</protein>
<comment type="function">
    <text evidence="1">Catalyzes the condensation of ATP and 5-phosphoribose 1-diphosphate to form N'-(5'-phosphoribosyl)-ATP (PR-ATP). Has a crucial role in the pathway because the rate of histidine biosynthesis seems to be controlled primarily by regulation of HisG enzymatic activity.</text>
</comment>
<comment type="catalytic activity">
    <reaction evidence="1">
        <text>1-(5-phospho-beta-D-ribosyl)-ATP + diphosphate = 5-phospho-alpha-D-ribose 1-diphosphate + ATP</text>
        <dbReference type="Rhea" id="RHEA:18473"/>
        <dbReference type="ChEBI" id="CHEBI:30616"/>
        <dbReference type="ChEBI" id="CHEBI:33019"/>
        <dbReference type="ChEBI" id="CHEBI:58017"/>
        <dbReference type="ChEBI" id="CHEBI:73183"/>
        <dbReference type="EC" id="2.4.2.17"/>
    </reaction>
</comment>
<comment type="cofactor">
    <cofactor evidence="1">
        <name>Mg(2+)</name>
        <dbReference type="ChEBI" id="CHEBI:18420"/>
    </cofactor>
</comment>
<comment type="activity regulation">
    <text evidence="1">Feedback inhibited by histidine.</text>
</comment>
<comment type="pathway">
    <text evidence="1">Amino-acid biosynthesis; L-histidine biosynthesis; L-histidine from 5-phospho-alpha-D-ribose 1-diphosphate: step 1/9.</text>
</comment>
<comment type="subcellular location">
    <subcellularLocation>
        <location evidence="1">Cytoplasm</location>
    </subcellularLocation>
</comment>
<comment type="similarity">
    <text evidence="1">Belongs to the ATP phosphoribosyltransferase family. Long subfamily.</text>
</comment>
<keyword id="KW-0028">Amino-acid biosynthesis</keyword>
<keyword id="KW-0067">ATP-binding</keyword>
<keyword id="KW-0963">Cytoplasm</keyword>
<keyword id="KW-0328">Glycosyltransferase</keyword>
<keyword id="KW-0368">Histidine biosynthesis</keyword>
<keyword id="KW-0460">Magnesium</keyword>
<keyword id="KW-0479">Metal-binding</keyword>
<keyword id="KW-0547">Nucleotide-binding</keyword>
<keyword id="KW-0808">Transferase</keyword>
<organism>
    <name type="scientific">Methanosarcina barkeri (strain Fusaro / DSM 804)</name>
    <dbReference type="NCBI Taxonomy" id="269797"/>
    <lineage>
        <taxon>Archaea</taxon>
        <taxon>Methanobacteriati</taxon>
        <taxon>Methanobacteriota</taxon>
        <taxon>Stenosarchaea group</taxon>
        <taxon>Methanomicrobia</taxon>
        <taxon>Methanosarcinales</taxon>
        <taxon>Methanosarcinaceae</taxon>
        <taxon>Methanosarcina</taxon>
    </lineage>
</organism>
<proteinExistence type="inferred from homology"/>
<feature type="chain" id="PRO_1000004470" description="ATP phosphoribosyltransferase">
    <location>
        <begin position="1"/>
        <end position="289"/>
    </location>
</feature>
<sequence length="289" mass="31462">MIRIAIPNKGRLYEPTISIFKDAGLPISGGAESRKLFAKTTDPDIHILFARAADIPEYVQDGAADVGITGIDLITERGAKVETLLDLKFGKASLVLAVPEDSDFQKAEDLEGRKIATEFPEITHQYFKKHGVNVEVIKVSGACEMTPHVGIADAIVDISSSGTTMMINHLKPIETVFSSTVYLIANKESLRTKEKILDIKTALESVLNAKDRRYLMMNVPESSLQAVKEVLPGMSGPTVMKVESSKLPGESILAVHAVVDADLIFTIVNKLKKVGARDVLVVPIERIMP</sequence>
<gene>
    <name evidence="1" type="primary">hisG</name>
    <name type="ordered locus">Mbar_A1312</name>
</gene>